<reference key="1">
    <citation type="journal article" date="2007" name="J. Bacteriol.">
        <title>Genome of the opportunistic pathogen Streptococcus sanguinis.</title>
        <authorList>
            <person name="Xu P."/>
            <person name="Alves J.M."/>
            <person name="Kitten T."/>
            <person name="Brown A."/>
            <person name="Chen Z."/>
            <person name="Ozaki L.S."/>
            <person name="Manque P."/>
            <person name="Ge X."/>
            <person name="Serrano M.G."/>
            <person name="Puiu D."/>
            <person name="Hendricks S."/>
            <person name="Wang Y."/>
            <person name="Chaplin M.D."/>
            <person name="Akan D."/>
            <person name="Paik S."/>
            <person name="Peterson D.L."/>
            <person name="Macrina F.L."/>
            <person name="Buck G.A."/>
        </authorList>
    </citation>
    <scope>NUCLEOTIDE SEQUENCE [LARGE SCALE GENOMIC DNA]</scope>
    <source>
        <strain>SK36</strain>
    </source>
</reference>
<sequence length="212" mass="23761">MNLLIMGLPGAGKGTQAAKIVDHFNVAHISTGDMFRAAIANQTEMGVLAKSYIDKGELVPDEVTNGIVKERLSQNDIKETGFLLDGYPRTIEQAHALDQTLTELDLALDGVINIEVDPNSLLERLSGRIIHRETGETFHKVFNPPADYKEEDYYQREDDKPETVKRRLDVNIAQGQPIIDHYRRKGLVHDIQGNQDINDVFSAIEKVLTNLK</sequence>
<keyword id="KW-0067">ATP-binding</keyword>
<keyword id="KW-0963">Cytoplasm</keyword>
<keyword id="KW-0418">Kinase</keyword>
<keyword id="KW-0545">Nucleotide biosynthesis</keyword>
<keyword id="KW-0547">Nucleotide-binding</keyword>
<keyword id="KW-1185">Reference proteome</keyword>
<keyword id="KW-0808">Transferase</keyword>
<organism>
    <name type="scientific">Streptococcus sanguinis (strain SK36)</name>
    <dbReference type="NCBI Taxonomy" id="388919"/>
    <lineage>
        <taxon>Bacteria</taxon>
        <taxon>Bacillati</taxon>
        <taxon>Bacillota</taxon>
        <taxon>Bacilli</taxon>
        <taxon>Lactobacillales</taxon>
        <taxon>Streptococcaceae</taxon>
        <taxon>Streptococcus</taxon>
    </lineage>
</organism>
<dbReference type="EC" id="2.7.4.3" evidence="1"/>
<dbReference type="EMBL" id="CP000387">
    <property type="protein sequence ID" value="ABN43590.1"/>
    <property type="molecule type" value="Genomic_DNA"/>
</dbReference>
<dbReference type="RefSeq" id="WP_011836337.1">
    <property type="nucleotide sequence ID" value="NC_009009.1"/>
</dbReference>
<dbReference type="RefSeq" id="YP_001034140.1">
    <property type="nucleotide sequence ID" value="NC_009009.1"/>
</dbReference>
<dbReference type="SMR" id="A3CK85"/>
<dbReference type="STRING" id="388919.SSA_0128"/>
<dbReference type="KEGG" id="ssa:SSA_0128"/>
<dbReference type="PATRIC" id="fig|388919.9.peg.122"/>
<dbReference type="eggNOG" id="COG0563">
    <property type="taxonomic scope" value="Bacteria"/>
</dbReference>
<dbReference type="HOGENOM" id="CLU_032354_1_2_9"/>
<dbReference type="OrthoDB" id="9805030at2"/>
<dbReference type="UniPathway" id="UPA00588">
    <property type="reaction ID" value="UER00649"/>
</dbReference>
<dbReference type="Proteomes" id="UP000002148">
    <property type="component" value="Chromosome"/>
</dbReference>
<dbReference type="GO" id="GO:0005737">
    <property type="term" value="C:cytoplasm"/>
    <property type="evidence" value="ECO:0007669"/>
    <property type="project" value="UniProtKB-SubCell"/>
</dbReference>
<dbReference type="GO" id="GO:0004017">
    <property type="term" value="F:adenylate kinase activity"/>
    <property type="evidence" value="ECO:0007669"/>
    <property type="project" value="UniProtKB-UniRule"/>
</dbReference>
<dbReference type="GO" id="GO:0005524">
    <property type="term" value="F:ATP binding"/>
    <property type="evidence" value="ECO:0007669"/>
    <property type="project" value="UniProtKB-UniRule"/>
</dbReference>
<dbReference type="GO" id="GO:0044209">
    <property type="term" value="P:AMP salvage"/>
    <property type="evidence" value="ECO:0007669"/>
    <property type="project" value="UniProtKB-UniRule"/>
</dbReference>
<dbReference type="CDD" id="cd01428">
    <property type="entry name" value="ADK"/>
    <property type="match status" value="1"/>
</dbReference>
<dbReference type="FunFam" id="3.40.50.300:FF:000106">
    <property type="entry name" value="Adenylate kinase mitochondrial"/>
    <property type="match status" value="1"/>
</dbReference>
<dbReference type="Gene3D" id="3.40.50.300">
    <property type="entry name" value="P-loop containing nucleotide triphosphate hydrolases"/>
    <property type="match status" value="1"/>
</dbReference>
<dbReference type="HAMAP" id="MF_00235">
    <property type="entry name" value="Adenylate_kinase_Adk"/>
    <property type="match status" value="1"/>
</dbReference>
<dbReference type="InterPro" id="IPR006259">
    <property type="entry name" value="Adenyl_kin_sub"/>
</dbReference>
<dbReference type="InterPro" id="IPR000850">
    <property type="entry name" value="Adenylat/UMP-CMP_kin"/>
</dbReference>
<dbReference type="InterPro" id="IPR033690">
    <property type="entry name" value="Adenylat_kinase_CS"/>
</dbReference>
<dbReference type="InterPro" id="IPR027417">
    <property type="entry name" value="P-loop_NTPase"/>
</dbReference>
<dbReference type="NCBIfam" id="TIGR01351">
    <property type="entry name" value="adk"/>
    <property type="match status" value="1"/>
</dbReference>
<dbReference type="NCBIfam" id="NF001380">
    <property type="entry name" value="PRK00279.1-2"/>
    <property type="match status" value="1"/>
</dbReference>
<dbReference type="NCBIfam" id="NF001381">
    <property type="entry name" value="PRK00279.1-3"/>
    <property type="match status" value="1"/>
</dbReference>
<dbReference type="NCBIfam" id="NF001382">
    <property type="entry name" value="PRK00279.1-4"/>
    <property type="match status" value="1"/>
</dbReference>
<dbReference type="NCBIfam" id="NF011100">
    <property type="entry name" value="PRK14527.1"/>
    <property type="match status" value="1"/>
</dbReference>
<dbReference type="PANTHER" id="PTHR23359">
    <property type="entry name" value="NUCLEOTIDE KINASE"/>
    <property type="match status" value="1"/>
</dbReference>
<dbReference type="Pfam" id="PF00406">
    <property type="entry name" value="ADK"/>
    <property type="match status" value="1"/>
</dbReference>
<dbReference type="PRINTS" id="PR00094">
    <property type="entry name" value="ADENYLTKNASE"/>
</dbReference>
<dbReference type="SUPFAM" id="SSF52540">
    <property type="entry name" value="P-loop containing nucleoside triphosphate hydrolases"/>
    <property type="match status" value="1"/>
</dbReference>
<dbReference type="PROSITE" id="PS00113">
    <property type="entry name" value="ADENYLATE_KINASE"/>
    <property type="match status" value="1"/>
</dbReference>
<comment type="function">
    <text evidence="1">Catalyzes the reversible transfer of the terminal phosphate group between ATP and AMP. Plays an important role in cellular energy homeostasis and in adenine nucleotide metabolism.</text>
</comment>
<comment type="catalytic activity">
    <reaction evidence="1">
        <text>AMP + ATP = 2 ADP</text>
        <dbReference type="Rhea" id="RHEA:12973"/>
        <dbReference type="ChEBI" id="CHEBI:30616"/>
        <dbReference type="ChEBI" id="CHEBI:456215"/>
        <dbReference type="ChEBI" id="CHEBI:456216"/>
        <dbReference type="EC" id="2.7.4.3"/>
    </reaction>
</comment>
<comment type="pathway">
    <text evidence="1">Purine metabolism; AMP biosynthesis via salvage pathway; AMP from ADP: step 1/1.</text>
</comment>
<comment type="subunit">
    <text evidence="1">Monomer.</text>
</comment>
<comment type="subcellular location">
    <subcellularLocation>
        <location evidence="1">Cytoplasm</location>
    </subcellularLocation>
</comment>
<comment type="domain">
    <text evidence="1">Consists of three domains, a large central CORE domain and two small peripheral domains, NMPbind and LID, which undergo movements during catalysis. The LID domain closes over the site of phosphoryl transfer upon ATP binding. Assembling and dissambling the active center during each catalytic cycle provides an effective means to prevent ATP hydrolysis.</text>
</comment>
<comment type="similarity">
    <text evidence="1">Belongs to the adenylate kinase family.</text>
</comment>
<name>KAD_STRSV</name>
<gene>
    <name evidence="1" type="primary">adk</name>
    <name type="ordered locus">SSA_0128</name>
</gene>
<accession>A3CK85</accession>
<proteinExistence type="inferred from homology"/>
<protein>
    <recommendedName>
        <fullName evidence="1">Adenylate kinase</fullName>
        <shortName evidence="1">AK</shortName>
        <ecNumber evidence="1">2.7.4.3</ecNumber>
    </recommendedName>
    <alternativeName>
        <fullName evidence="1">ATP-AMP transphosphorylase</fullName>
    </alternativeName>
    <alternativeName>
        <fullName evidence="1">ATP:AMP phosphotransferase</fullName>
    </alternativeName>
    <alternativeName>
        <fullName evidence="1">Adenylate monophosphate kinase</fullName>
    </alternativeName>
</protein>
<feature type="chain" id="PRO_1000058919" description="Adenylate kinase">
    <location>
        <begin position="1"/>
        <end position="212"/>
    </location>
</feature>
<feature type="region of interest" description="NMP" evidence="1">
    <location>
        <begin position="30"/>
        <end position="59"/>
    </location>
</feature>
<feature type="region of interest" description="LID" evidence="1">
    <location>
        <begin position="127"/>
        <end position="159"/>
    </location>
</feature>
<feature type="binding site" evidence="1">
    <location>
        <begin position="10"/>
        <end position="15"/>
    </location>
    <ligand>
        <name>ATP</name>
        <dbReference type="ChEBI" id="CHEBI:30616"/>
    </ligand>
</feature>
<feature type="binding site" evidence="1">
    <location>
        <position position="31"/>
    </location>
    <ligand>
        <name>AMP</name>
        <dbReference type="ChEBI" id="CHEBI:456215"/>
    </ligand>
</feature>
<feature type="binding site" evidence="1">
    <location>
        <position position="36"/>
    </location>
    <ligand>
        <name>AMP</name>
        <dbReference type="ChEBI" id="CHEBI:456215"/>
    </ligand>
</feature>
<feature type="binding site" evidence="1">
    <location>
        <begin position="57"/>
        <end position="59"/>
    </location>
    <ligand>
        <name>AMP</name>
        <dbReference type="ChEBI" id="CHEBI:456215"/>
    </ligand>
</feature>
<feature type="binding site" evidence="1">
    <location>
        <begin position="86"/>
        <end position="89"/>
    </location>
    <ligand>
        <name>AMP</name>
        <dbReference type="ChEBI" id="CHEBI:456215"/>
    </ligand>
</feature>
<feature type="binding site" evidence="1">
    <location>
        <position position="93"/>
    </location>
    <ligand>
        <name>AMP</name>
        <dbReference type="ChEBI" id="CHEBI:456215"/>
    </ligand>
</feature>
<feature type="binding site" evidence="1">
    <location>
        <position position="128"/>
    </location>
    <ligand>
        <name>ATP</name>
        <dbReference type="ChEBI" id="CHEBI:30616"/>
    </ligand>
</feature>
<feature type="binding site" evidence="1">
    <location>
        <begin position="137"/>
        <end position="138"/>
    </location>
    <ligand>
        <name>ATP</name>
        <dbReference type="ChEBI" id="CHEBI:30616"/>
    </ligand>
</feature>
<feature type="binding site" evidence="1">
    <location>
        <position position="156"/>
    </location>
    <ligand>
        <name>AMP</name>
        <dbReference type="ChEBI" id="CHEBI:456215"/>
    </ligand>
</feature>
<feature type="binding site" evidence="1">
    <location>
        <position position="167"/>
    </location>
    <ligand>
        <name>AMP</name>
        <dbReference type="ChEBI" id="CHEBI:456215"/>
    </ligand>
</feature>
<feature type="binding site" evidence="1">
    <location>
        <position position="195"/>
    </location>
    <ligand>
        <name>ATP</name>
        <dbReference type="ChEBI" id="CHEBI:30616"/>
    </ligand>
</feature>
<evidence type="ECO:0000255" key="1">
    <source>
        <dbReference type="HAMAP-Rule" id="MF_00235"/>
    </source>
</evidence>